<sequence>MTQDGTWSDESDWELDDADLADLAEAAPAPVLAIVGRPNVGKSTLVNRILGRREAVVQDIPGVTRDRVSYDALWNGRRFVVQDTGGWEPDAKGLQQLVAEQASVAMRTADAVVLVVDATVGATTADEAAARILLRSGKPVFLAANKVDSDKAEADAATLWSMGLGEPHAISAMHGRGVADLLDTVLKKLPEVAESVSAGGGPRRVALVGKPNVGKSSLLNKLAGDERSVVHDVAGTTVDPVDSLIELGGKVWRFVDTAGLRRKVGQASGHEFYASVRTRGAIDAAEVVVLLIDASQPLTEQDLRVLSMVIEAGRAVVLAYNKWDLVDEDRRDLLDREIDRELVQIRWAQRVNISAKTGRAVQKLVPAMETALASWDTRIPTGPLNSWIKEVVAATPPPVRGGKQPRILFATQATARPPTFVLFTTGFLEAGYRRFLERRLRETFGFEGSPIRINVRVREKRGAKRPGRR</sequence>
<feature type="chain" id="PRO_1000099140" description="GTPase Der">
    <location>
        <begin position="1"/>
        <end position="469"/>
    </location>
</feature>
<feature type="domain" description="EngA-type G 1">
    <location>
        <begin position="30"/>
        <end position="193"/>
    </location>
</feature>
<feature type="domain" description="EngA-type G 2">
    <location>
        <begin position="203"/>
        <end position="376"/>
    </location>
</feature>
<feature type="domain" description="KH-like" evidence="1">
    <location>
        <begin position="377"/>
        <end position="459"/>
    </location>
</feature>
<feature type="binding site" evidence="1">
    <location>
        <begin position="36"/>
        <end position="43"/>
    </location>
    <ligand>
        <name>GTP</name>
        <dbReference type="ChEBI" id="CHEBI:37565"/>
        <label>1</label>
    </ligand>
</feature>
<feature type="binding site" evidence="1">
    <location>
        <begin position="83"/>
        <end position="87"/>
    </location>
    <ligand>
        <name>GTP</name>
        <dbReference type="ChEBI" id="CHEBI:37565"/>
        <label>1</label>
    </ligand>
</feature>
<feature type="binding site" evidence="1">
    <location>
        <begin position="145"/>
        <end position="148"/>
    </location>
    <ligand>
        <name>GTP</name>
        <dbReference type="ChEBI" id="CHEBI:37565"/>
        <label>1</label>
    </ligand>
</feature>
<feature type="binding site" evidence="1">
    <location>
        <begin position="209"/>
        <end position="216"/>
    </location>
    <ligand>
        <name>GTP</name>
        <dbReference type="ChEBI" id="CHEBI:37565"/>
        <label>2</label>
    </ligand>
</feature>
<feature type="binding site" evidence="1">
    <location>
        <begin position="256"/>
        <end position="260"/>
    </location>
    <ligand>
        <name>GTP</name>
        <dbReference type="ChEBI" id="CHEBI:37565"/>
        <label>2</label>
    </ligand>
</feature>
<feature type="binding site" evidence="1">
    <location>
        <begin position="321"/>
        <end position="324"/>
    </location>
    <ligand>
        <name>GTP</name>
        <dbReference type="ChEBI" id="CHEBI:37565"/>
        <label>2</label>
    </ligand>
</feature>
<organism>
    <name type="scientific">Mycobacterium marinum (strain ATCC BAA-535 / M)</name>
    <dbReference type="NCBI Taxonomy" id="216594"/>
    <lineage>
        <taxon>Bacteria</taxon>
        <taxon>Bacillati</taxon>
        <taxon>Actinomycetota</taxon>
        <taxon>Actinomycetes</taxon>
        <taxon>Mycobacteriales</taxon>
        <taxon>Mycobacteriaceae</taxon>
        <taxon>Mycobacterium</taxon>
        <taxon>Mycobacterium ulcerans group</taxon>
    </lineage>
</organism>
<keyword id="KW-0342">GTP-binding</keyword>
<keyword id="KW-0547">Nucleotide-binding</keyword>
<keyword id="KW-1185">Reference proteome</keyword>
<keyword id="KW-0677">Repeat</keyword>
<keyword id="KW-0690">Ribosome biogenesis</keyword>
<accession>B2HRU9</accession>
<name>DER_MYCMM</name>
<dbReference type="EMBL" id="CP000854">
    <property type="protein sequence ID" value="ACC40979.1"/>
    <property type="molecule type" value="Genomic_DNA"/>
</dbReference>
<dbReference type="RefSeq" id="WP_012394265.1">
    <property type="nucleotide sequence ID" value="NC_010612.1"/>
</dbReference>
<dbReference type="SMR" id="B2HRU9"/>
<dbReference type="STRING" id="216594.MMAR_2528"/>
<dbReference type="KEGG" id="mmi:MMAR_2528"/>
<dbReference type="eggNOG" id="COG1160">
    <property type="taxonomic scope" value="Bacteria"/>
</dbReference>
<dbReference type="HOGENOM" id="CLU_016077_6_2_11"/>
<dbReference type="OrthoDB" id="9805918at2"/>
<dbReference type="Proteomes" id="UP000001190">
    <property type="component" value="Chromosome"/>
</dbReference>
<dbReference type="GO" id="GO:0016887">
    <property type="term" value="F:ATP hydrolysis activity"/>
    <property type="evidence" value="ECO:0007669"/>
    <property type="project" value="InterPro"/>
</dbReference>
<dbReference type="GO" id="GO:0005525">
    <property type="term" value="F:GTP binding"/>
    <property type="evidence" value="ECO:0007669"/>
    <property type="project" value="UniProtKB-UniRule"/>
</dbReference>
<dbReference type="GO" id="GO:0043022">
    <property type="term" value="F:ribosome binding"/>
    <property type="evidence" value="ECO:0007669"/>
    <property type="project" value="TreeGrafter"/>
</dbReference>
<dbReference type="GO" id="GO:0042254">
    <property type="term" value="P:ribosome biogenesis"/>
    <property type="evidence" value="ECO:0007669"/>
    <property type="project" value="UniProtKB-KW"/>
</dbReference>
<dbReference type="CDD" id="cd01894">
    <property type="entry name" value="EngA1"/>
    <property type="match status" value="1"/>
</dbReference>
<dbReference type="CDD" id="cd01895">
    <property type="entry name" value="EngA2"/>
    <property type="match status" value="1"/>
</dbReference>
<dbReference type="FunFam" id="3.30.300.20:FF:000004">
    <property type="entry name" value="GTPase Der"/>
    <property type="match status" value="1"/>
</dbReference>
<dbReference type="FunFam" id="3.40.50.300:FF:000040">
    <property type="entry name" value="GTPase Der"/>
    <property type="match status" value="1"/>
</dbReference>
<dbReference type="FunFam" id="3.40.50.300:FF:000057">
    <property type="entry name" value="GTPase Der"/>
    <property type="match status" value="1"/>
</dbReference>
<dbReference type="Gene3D" id="3.30.300.20">
    <property type="match status" value="1"/>
</dbReference>
<dbReference type="Gene3D" id="3.40.50.300">
    <property type="entry name" value="P-loop containing nucleotide triphosphate hydrolases"/>
    <property type="match status" value="2"/>
</dbReference>
<dbReference type="HAMAP" id="MF_00195">
    <property type="entry name" value="GTPase_Der"/>
    <property type="match status" value="1"/>
</dbReference>
<dbReference type="InterPro" id="IPR003593">
    <property type="entry name" value="AAA+_ATPase"/>
</dbReference>
<dbReference type="InterPro" id="IPR031166">
    <property type="entry name" value="G_ENGA"/>
</dbReference>
<dbReference type="InterPro" id="IPR006073">
    <property type="entry name" value="GTP-bd"/>
</dbReference>
<dbReference type="InterPro" id="IPR016484">
    <property type="entry name" value="GTPase_Der"/>
</dbReference>
<dbReference type="InterPro" id="IPR032859">
    <property type="entry name" value="KH_dom-like"/>
</dbReference>
<dbReference type="InterPro" id="IPR015946">
    <property type="entry name" value="KH_dom-like_a/b"/>
</dbReference>
<dbReference type="InterPro" id="IPR027417">
    <property type="entry name" value="P-loop_NTPase"/>
</dbReference>
<dbReference type="InterPro" id="IPR005225">
    <property type="entry name" value="Small_GTP-bd"/>
</dbReference>
<dbReference type="NCBIfam" id="TIGR03594">
    <property type="entry name" value="GTPase_EngA"/>
    <property type="match status" value="1"/>
</dbReference>
<dbReference type="NCBIfam" id="NF002828">
    <property type="entry name" value="PRK03003.1"/>
    <property type="match status" value="1"/>
</dbReference>
<dbReference type="NCBIfam" id="TIGR00231">
    <property type="entry name" value="small_GTP"/>
    <property type="match status" value="2"/>
</dbReference>
<dbReference type="PANTHER" id="PTHR43834">
    <property type="entry name" value="GTPASE DER"/>
    <property type="match status" value="1"/>
</dbReference>
<dbReference type="PANTHER" id="PTHR43834:SF6">
    <property type="entry name" value="GTPASE DER"/>
    <property type="match status" value="1"/>
</dbReference>
<dbReference type="Pfam" id="PF14714">
    <property type="entry name" value="KH_dom-like"/>
    <property type="match status" value="1"/>
</dbReference>
<dbReference type="Pfam" id="PF01926">
    <property type="entry name" value="MMR_HSR1"/>
    <property type="match status" value="2"/>
</dbReference>
<dbReference type="PIRSF" id="PIRSF006485">
    <property type="entry name" value="GTP-binding_EngA"/>
    <property type="match status" value="1"/>
</dbReference>
<dbReference type="PRINTS" id="PR00326">
    <property type="entry name" value="GTP1OBG"/>
</dbReference>
<dbReference type="SMART" id="SM00382">
    <property type="entry name" value="AAA"/>
    <property type="match status" value="2"/>
</dbReference>
<dbReference type="SUPFAM" id="SSF52540">
    <property type="entry name" value="P-loop containing nucleoside triphosphate hydrolases"/>
    <property type="match status" value="2"/>
</dbReference>
<dbReference type="PROSITE" id="PS51712">
    <property type="entry name" value="G_ENGA"/>
    <property type="match status" value="2"/>
</dbReference>
<evidence type="ECO:0000255" key="1">
    <source>
        <dbReference type="HAMAP-Rule" id="MF_00195"/>
    </source>
</evidence>
<gene>
    <name evidence="1" type="primary">der</name>
    <name type="synonym">engA</name>
    <name type="ordered locus">MMAR_2528</name>
</gene>
<reference key="1">
    <citation type="journal article" date="2008" name="Genome Res.">
        <title>Insights from the complete genome sequence of Mycobacterium marinum on the evolution of Mycobacterium tuberculosis.</title>
        <authorList>
            <person name="Stinear T.P."/>
            <person name="Seemann T."/>
            <person name="Harrison P.F."/>
            <person name="Jenkin G.A."/>
            <person name="Davies J.K."/>
            <person name="Johnson P.D."/>
            <person name="Abdellah Z."/>
            <person name="Arrowsmith C."/>
            <person name="Chillingworth T."/>
            <person name="Churcher C."/>
            <person name="Clarke K."/>
            <person name="Cronin A."/>
            <person name="Davis P."/>
            <person name="Goodhead I."/>
            <person name="Holroyd N."/>
            <person name="Jagels K."/>
            <person name="Lord A."/>
            <person name="Moule S."/>
            <person name="Mungall K."/>
            <person name="Norbertczak H."/>
            <person name="Quail M.A."/>
            <person name="Rabbinowitsch E."/>
            <person name="Walker D."/>
            <person name="White B."/>
            <person name="Whitehead S."/>
            <person name="Small P.L."/>
            <person name="Brosch R."/>
            <person name="Ramakrishnan L."/>
            <person name="Fischbach M.A."/>
            <person name="Parkhill J."/>
            <person name="Cole S.T."/>
        </authorList>
    </citation>
    <scope>NUCLEOTIDE SEQUENCE [LARGE SCALE GENOMIC DNA]</scope>
    <source>
        <strain>ATCC BAA-535 / M</strain>
    </source>
</reference>
<proteinExistence type="inferred from homology"/>
<protein>
    <recommendedName>
        <fullName evidence="1">GTPase Der</fullName>
    </recommendedName>
    <alternativeName>
        <fullName evidence="1">GTP-binding protein EngA</fullName>
    </alternativeName>
</protein>
<comment type="function">
    <text evidence="1">GTPase that plays an essential role in the late steps of ribosome biogenesis.</text>
</comment>
<comment type="subunit">
    <text evidence="1">Associates with the 50S ribosomal subunit.</text>
</comment>
<comment type="similarity">
    <text evidence="1">Belongs to the TRAFAC class TrmE-Era-EngA-EngB-Septin-like GTPase superfamily. EngA (Der) GTPase family.</text>
</comment>